<accession>Q2HCV1</accession>
<feature type="chain" id="PRO_0000370486" description="Pescadillo homolog">
    <location>
        <begin position="1"/>
        <end position="660"/>
    </location>
</feature>
<feature type="domain" description="BRCT" evidence="1">
    <location>
        <begin position="360"/>
        <end position="476"/>
    </location>
</feature>
<feature type="region of interest" description="Disordered" evidence="2">
    <location>
        <begin position="313"/>
        <end position="358"/>
    </location>
</feature>
<feature type="region of interest" description="Disordered" evidence="2">
    <location>
        <begin position="471"/>
        <end position="660"/>
    </location>
</feature>
<feature type="coiled-coil region" evidence="1">
    <location>
        <begin position="501"/>
        <end position="659"/>
    </location>
</feature>
<feature type="compositionally biased region" description="Basic and acidic residues" evidence="2">
    <location>
        <begin position="331"/>
        <end position="342"/>
    </location>
</feature>
<feature type="compositionally biased region" description="Acidic residues" evidence="2">
    <location>
        <begin position="504"/>
        <end position="566"/>
    </location>
</feature>
<feature type="compositionally biased region" description="Basic and acidic residues" evidence="2">
    <location>
        <begin position="584"/>
        <end position="619"/>
    </location>
</feature>
<name>PESC_CHAGB</name>
<sequence>MGKLKKKGQSGQAKNYITRTQAVKKLQLSLPDFRKLCIWKGIYPREPRSRKKVSKSATASTTFYYTKDIQYLLHEPLLQKFRDQKVLEKKISRALGRGDVGDAARLERNAARPDKTGKPRYTLNHVIRERYPTFIDALRDLDDCLSMLFLFANLPSTTAVPAKMIARCERLCLEFEHYLITSHSLRKSFLSIKGIYYQASIQGEDILWLVPYKFNQRVVGDVDFRIMGTFVEFYMTLLGFVNYRLYTAVGLKYPPKFDQLKDDQGAELGAFALEGVNIATNDDTKAITNGEAEHGPDPKVQAEVDKIVQQLRVESDDKASEEGPADDVEGEEKPSDAIDKFEPVAPGGDVLPQPSYSSSDPAQLFSRLTFFLSRETPRQSLEFILRAFGCKRIGWDSVLGEGSFTTDESDPSITHQIVDRPVVQAAMNEEGDGEDNQTSQKVGPNHRYPGRLYVQPQWVWDSVNDEELKSPELYGPGAALPPHLSPFVKPTQGQYDPTIPLEEQQSEGEAIDAELEDANEEAGEESDVENDMDVASDEDEEEEDEEEFDGVSVSEEEEGSEDEEESATLQRQRELEAEISGKSVKGDKKMDAKTKAKLEAKKALERKKKSEAEDLERAKGMLSKKKRKLFEQMQYTNNKKSAEDLKLRQKRRRLEKEKKA</sequence>
<comment type="function">
    <text evidence="1">Component of the NOP7 complex, which is required for maturation of the 25S and 5.8S ribosomal RNAs and formation of the 60S ribosome.</text>
</comment>
<comment type="subunit">
    <text evidence="1">Component of the NOP7 complex, composed of ERB1, NOP7 and YTM1. The complex is held together by ERB1, which interacts with NOP7 via its N-terminal domain and with YTM1 via a high-affinity interaction between the seven-bladed beta-propeller domains of the 2 proteins. The NOP7 complex associates with the 66S pre-ribosome.</text>
</comment>
<comment type="subcellular location">
    <subcellularLocation>
        <location evidence="1">Nucleus</location>
        <location evidence="1">Nucleolus</location>
    </subcellularLocation>
    <subcellularLocation>
        <location evidence="1">Nucleus</location>
        <location evidence="1">Nucleoplasm</location>
    </subcellularLocation>
</comment>
<comment type="similarity">
    <text evidence="1">Belongs to the pescadillo family.</text>
</comment>
<keyword id="KW-0175">Coiled coil</keyword>
<keyword id="KW-0539">Nucleus</keyword>
<keyword id="KW-1185">Reference proteome</keyword>
<keyword id="KW-0690">Ribosome biogenesis</keyword>
<keyword id="KW-0698">rRNA processing</keyword>
<dbReference type="EMBL" id="CH408029">
    <property type="protein sequence ID" value="EAQ93718.1"/>
    <property type="molecule type" value="Genomic_DNA"/>
</dbReference>
<dbReference type="RefSeq" id="XP_001221174.1">
    <property type="nucleotide sequence ID" value="XM_001221173.1"/>
</dbReference>
<dbReference type="SMR" id="Q2HCV1"/>
<dbReference type="FunCoup" id="Q2HCV1">
    <property type="interactions" value="1132"/>
</dbReference>
<dbReference type="STRING" id="306901.Q2HCV1"/>
<dbReference type="GeneID" id="4387482"/>
<dbReference type="VEuPathDB" id="FungiDB:CHGG_01953"/>
<dbReference type="eggNOG" id="KOG2481">
    <property type="taxonomic scope" value="Eukaryota"/>
</dbReference>
<dbReference type="HOGENOM" id="CLU_019619_1_1_1"/>
<dbReference type="InParanoid" id="Q2HCV1"/>
<dbReference type="OMA" id="QKVTWIV"/>
<dbReference type="OrthoDB" id="10264910at2759"/>
<dbReference type="Proteomes" id="UP000001056">
    <property type="component" value="Unassembled WGS sequence"/>
</dbReference>
<dbReference type="GO" id="GO:0005654">
    <property type="term" value="C:nucleoplasm"/>
    <property type="evidence" value="ECO:0007669"/>
    <property type="project" value="UniProtKB-SubCell"/>
</dbReference>
<dbReference type="GO" id="GO:0070545">
    <property type="term" value="C:PeBoW complex"/>
    <property type="evidence" value="ECO:0007669"/>
    <property type="project" value="TreeGrafter"/>
</dbReference>
<dbReference type="GO" id="GO:0030687">
    <property type="term" value="C:preribosome, large subunit precursor"/>
    <property type="evidence" value="ECO:0007669"/>
    <property type="project" value="UniProtKB-UniRule"/>
</dbReference>
<dbReference type="GO" id="GO:0043021">
    <property type="term" value="F:ribonucleoprotein complex binding"/>
    <property type="evidence" value="ECO:0007669"/>
    <property type="project" value="UniProtKB-UniRule"/>
</dbReference>
<dbReference type="GO" id="GO:0003723">
    <property type="term" value="F:RNA binding"/>
    <property type="evidence" value="ECO:0007669"/>
    <property type="project" value="TreeGrafter"/>
</dbReference>
<dbReference type="GO" id="GO:0000466">
    <property type="term" value="P:maturation of 5.8S rRNA from tricistronic rRNA transcript (SSU-rRNA, 5.8S rRNA, LSU-rRNA)"/>
    <property type="evidence" value="ECO:0007669"/>
    <property type="project" value="UniProtKB-UniRule"/>
</dbReference>
<dbReference type="GO" id="GO:0000463">
    <property type="term" value="P:maturation of LSU-rRNA from tricistronic rRNA transcript (SSU-rRNA, 5.8S rRNA, LSU-rRNA)"/>
    <property type="evidence" value="ECO:0007669"/>
    <property type="project" value="UniProtKB-UniRule"/>
</dbReference>
<dbReference type="CDD" id="cd17709">
    <property type="entry name" value="BRCT_pescadillo_like"/>
    <property type="match status" value="1"/>
</dbReference>
<dbReference type="Gene3D" id="3.40.50.10190">
    <property type="entry name" value="BRCT domain"/>
    <property type="match status" value="1"/>
</dbReference>
<dbReference type="HAMAP" id="MF_03028">
    <property type="entry name" value="Pescadillo"/>
    <property type="match status" value="1"/>
</dbReference>
<dbReference type="InterPro" id="IPR001357">
    <property type="entry name" value="BRCT_dom"/>
</dbReference>
<dbReference type="InterPro" id="IPR036420">
    <property type="entry name" value="BRCT_dom_sf"/>
</dbReference>
<dbReference type="InterPro" id="IPR010613">
    <property type="entry name" value="PES"/>
</dbReference>
<dbReference type="PANTHER" id="PTHR12221">
    <property type="entry name" value="PESCADILLO - RELATED"/>
    <property type="match status" value="1"/>
</dbReference>
<dbReference type="PANTHER" id="PTHR12221:SF6">
    <property type="entry name" value="PESCADILLO HOMOLOG"/>
    <property type="match status" value="1"/>
</dbReference>
<dbReference type="Pfam" id="PF06732">
    <property type="entry name" value="Pescadillo_N"/>
    <property type="match status" value="1"/>
</dbReference>
<dbReference type="SUPFAM" id="SSF52113">
    <property type="entry name" value="BRCT domain"/>
    <property type="match status" value="1"/>
</dbReference>
<dbReference type="PROSITE" id="PS50172">
    <property type="entry name" value="BRCT"/>
    <property type="match status" value="1"/>
</dbReference>
<evidence type="ECO:0000255" key="1">
    <source>
        <dbReference type="HAMAP-Rule" id="MF_03028"/>
    </source>
</evidence>
<evidence type="ECO:0000256" key="2">
    <source>
        <dbReference type="SAM" id="MobiDB-lite"/>
    </source>
</evidence>
<organism>
    <name type="scientific">Chaetomium globosum (strain ATCC 6205 / CBS 148.51 / DSM 1962 / NBRC 6347 / NRRL 1970)</name>
    <name type="common">Soil fungus</name>
    <dbReference type="NCBI Taxonomy" id="306901"/>
    <lineage>
        <taxon>Eukaryota</taxon>
        <taxon>Fungi</taxon>
        <taxon>Dikarya</taxon>
        <taxon>Ascomycota</taxon>
        <taxon>Pezizomycotina</taxon>
        <taxon>Sordariomycetes</taxon>
        <taxon>Sordariomycetidae</taxon>
        <taxon>Sordariales</taxon>
        <taxon>Chaetomiaceae</taxon>
        <taxon>Chaetomium</taxon>
    </lineage>
</organism>
<gene>
    <name evidence="1" type="primary">NOP7</name>
    <name type="ORF">CHGG_01953</name>
</gene>
<reference key="1">
    <citation type="journal article" date="2015" name="Genome Announc.">
        <title>Draft genome sequence of the cellulolytic fungus Chaetomium globosum.</title>
        <authorList>
            <person name="Cuomo C.A."/>
            <person name="Untereiner W.A."/>
            <person name="Ma L.-J."/>
            <person name="Grabherr M."/>
            <person name="Birren B.W."/>
        </authorList>
    </citation>
    <scope>NUCLEOTIDE SEQUENCE [LARGE SCALE GENOMIC DNA]</scope>
    <source>
        <strain>ATCC 6205 / CBS 148.51 / DSM 1962 / NBRC 6347 / NRRL 1970</strain>
    </source>
</reference>
<protein>
    <recommendedName>
        <fullName evidence="1">Pescadillo homolog</fullName>
    </recommendedName>
    <alternativeName>
        <fullName evidence="1">Nucleolar protein 7 homolog</fullName>
    </alternativeName>
</protein>
<proteinExistence type="inferred from homology"/>